<feature type="chain" id="PRO_1000203237" description="Phosphoribosylaminoimidazole-succinocarboxamide synthase">
    <location>
        <begin position="1"/>
        <end position="239"/>
    </location>
</feature>
<organism>
    <name type="scientific">Psychrobacter sp. (strain PRwf-1)</name>
    <dbReference type="NCBI Taxonomy" id="349106"/>
    <lineage>
        <taxon>Bacteria</taxon>
        <taxon>Pseudomonadati</taxon>
        <taxon>Pseudomonadota</taxon>
        <taxon>Gammaproteobacteria</taxon>
        <taxon>Moraxellales</taxon>
        <taxon>Moraxellaceae</taxon>
        <taxon>Psychrobacter</taxon>
    </lineage>
</organism>
<gene>
    <name evidence="1" type="primary">purC</name>
    <name type="ordered locus">PsycPRwf_2126</name>
</gene>
<dbReference type="EC" id="6.3.2.6" evidence="1"/>
<dbReference type="EMBL" id="CP000713">
    <property type="protein sequence ID" value="ABQ95066.1"/>
    <property type="molecule type" value="Genomic_DNA"/>
</dbReference>
<dbReference type="SMR" id="A5WHC5"/>
<dbReference type="STRING" id="349106.PsycPRwf_2126"/>
<dbReference type="KEGG" id="prw:PsycPRwf_2126"/>
<dbReference type="eggNOG" id="COG0152">
    <property type="taxonomic scope" value="Bacteria"/>
</dbReference>
<dbReference type="HOGENOM" id="CLU_061495_2_0_6"/>
<dbReference type="UniPathway" id="UPA00074">
    <property type="reaction ID" value="UER00131"/>
</dbReference>
<dbReference type="GO" id="GO:0005829">
    <property type="term" value="C:cytosol"/>
    <property type="evidence" value="ECO:0007669"/>
    <property type="project" value="TreeGrafter"/>
</dbReference>
<dbReference type="GO" id="GO:0005524">
    <property type="term" value="F:ATP binding"/>
    <property type="evidence" value="ECO:0007669"/>
    <property type="project" value="UniProtKB-KW"/>
</dbReference>
<dbReference type="GO" id="GO:0004639">
    <property type="term" value="F:phosphoribosylaminoimidazolesuccinocarboxamide synthase activity"/>
    <property type="evidence" value="ECO:0007669"/>
    <property type="project" value="UniProtKB-UniRule"/>
</dbReference>
<dbReference type="GO" id="GO:0006189">
    <property type="term" value="P:'de novo' IMP biosynthetic process"/>
    <property type="evidence" value="ECO:0007669"/>
    <property type="project" value="UniProtKB-UniRule"/>
</dbReference>
<dbReference type="GO" id="GO:0009236">
    <property type="term" value="P:cobalamin biosynthetic process"/>
    <property type="evidence" value="ECO:0007669"/>
    <property type="project" value="InterPro"/>
</dbReference>
<dbReference type="CDD" id="cd01415">
    <property type="entry name" value="SAICAR_synt_PurC"/>
    <property type="match status" value="1"/>
</dbReference>
<dbReference type="FunFam" id="3.30.200.20:FF:000086">
    <property type="entry name" value="Phosphoribosylaminoimidazole-succinocarboxamide synthase"/>
    <property type="match status" value="1"/>
</dbReference>
<dbReference type="FunFam" id="3.30.470.20:FF:000006">
    <property type="entry name" value="Phosphoribosylaminoimidazole-succinocarboxamide synthase"/>
    <property type="match status" value="1"/>
</dbReference>
<dbReference type="Gene3D" id="3.30.470.20">
    <property type="entry name" value="ATP-grasp fold, B domain"/>
    <property type="match status" value="1"/>
</dbReference>
<dbReference type="Gene3D" id="3.30.200.20">
    <property type="entry name" value="Phosphorylase Kinase, domain 1"/>
    <property type="match status" value="1"/>
</dbReference>
<dbReference type="HAMAP" id="MF_00137">
    <property type="entry name" value="SAICAR_synth"/>
    <property type="match status" value="1"/>
</dbReference>
<dbReference type="InterPro" id="IPR028923">
    <property type="entry name" value="SAICAR_synt/ADE2_N"/>
</dbReference>
<dbReference type="InterPro" id="IPR033934">
    <property type="entry name" value="SAICAR_synt_PurC"/>
</dbReference>
<dbReference type="InterPro" id="IPR001636">
    <property type="entry name" value="SAICAR_synth"/>
</dbReference>
<dbReference type="InterPro" id="IPR050089">
    <property type="entry name" value="SAICAR_synthetase"/>
</dbReference>
<dbReference type="InterPro" id="IPR018236">
    <property type="entry name" value="SAICAR_synthetase_CS"/>
</dbReference>
<dbReference type="NCBIfam" id="TIGR00081">
    <property type="entry name" value="purC"/>
    <property type="match status" value="1"/>
</dbReference>
<dbReference type="PANTHER" id="PTHR43599">
    <property type="entry name" value="MULTIFUNCTIONAL PROTEIN ADE2"/>
    <property type="match status" value="1"/>
</dbReference>
<dbReference type="PANTHER" id="PTHR43599:SF3">
    <property type="entry name" value="SI:DKEY-6E2.2"/>
    <property type="match status" value="1"/>
</dbReference>
<dbReference type="Pfam" id="PF01259">
    <property type="entry name" value="SAICAR_synt"/>
    <property type="match status" value="1"/>
</dbReference>
<dbReference type="SUPFAM" id="SSF56104">
    <property type="entry name" value="SAICAR synthase-like"/>
    <property type="match status" value="1"/>
</dbReference>
<dbReference type="PROSITE" id="PS01057">
    <property type="entry name" value="SAICAR_SYNTHETASE_1"/>
    <property type="match status" value="1"/>
</dbReference>
<dbReference type="PROSITE" id="PS01058">
    <property type="entry name" value="SAICAR_SYNTHETASE_2"/>
    <property type="match status" value="1"/>
</dbReference>
<reference key="1">
    <citation type="submission" date="2007-05" db="EMBL/GenBank/DDBJ databases">
        <title>Complete sequence of chromosome of Psychrobacter sp. PRwf-1.</title>
        <authorList>
            <consortium name="US DOE Joint Genome Institute"/>
            <person name="Copeland A."/>
            <person name="Lucas S."/>
            <person name="Lapidus A."/>
            <person name="Barry K."/>
            <person name="Detter J.C."/>
            <person name="Glavina del Rio T."/>
            <person name="Hammon N."/>
            <person name="Israni S."/>
            <person name="Dalin E."/>
            <person name="Tice H."/>
            <person name="Pitluck S."/>
            <person name="Chain P."/>
            <person name="Malfatti S."/>
            <person name="Shin M."/>
            <person name="Vergez L."/>
            <person name="Schmutz J."/>
            <person name="Larimer F."/>
            <person name="Land M."/>
            <person name="Hauser L."/>
            <person name="Kyrpides N."/>
            <person name="Kim E."/>
            <person name="Tiedje J."/>
            <person name="Richardson P."/>
        </authorList>
    </citation>
    <scope>NUCLEOTIDE SEQUENCE [LARGE SCALE GENOMIC DNA]</scope>
    <source>
        <strain>PRwf-1</strain>
    </source>
</reference>
<accession>A5WHC5</accession>
<evidence type="ECO:0000255" key="1">
    <source>
        <dbReference type="HAMAP-Rule" id="MF_00137"/>
    </source>
</evidence>
<sequence>MQLQKQDLLYKGKAKSVYETENSDYLILHFRDDTSAFNGERIEQLGRKGQVNNRFNAFIMQKLAEAGIETHFEKQLSDDEVLVKRLEMIPVECVVRNFAAGSLVRRLGLEEGQPLTPPTYELFFKDDALGDPMVNESLSVSLGWATPEQLAKMKELTFKVNDVLKELFDAGGLMLVDFKLEFGVFQDRIVLGDEFSPDGCRIWDKETKKKLDKDRFRQSLGDVIESYEEVAQRIGVPMN</sequence>
<proteinExistence type="inferred from homology"/>
<protein>
    <recommendedName>
        <fullName evidence="1">Phosphoribosylaminoimidazole-succinocarboxamide synthase</fullName>
        <ecNumber evidence="1">6.3.2.6</ecNumber>
    </recommendedName>
    <alternativeName>
        <fullName evidence="1">SAICAR synthetase</fullName>
    </alternativeName>
</protein>
<name>PUR7_PSYWF</name>
<comment type="catalytic activity">
    <reaction evidence="1">
        <text>5-amino-1-(5-phospho-D-ribosyl)imidazole-4-carboxylate + L-aspartate + ATP = (2S)-2-[5-amino-1-(5-phospho-beta-D-ribosyl)imidazole-4-carboxamido]succinate + ADP + phosphate + 2 H(+)</text>
        <dbReference type="Rhea" id="RHEA:22628"/>
        <dbReference type="ChEBI" id="CHEBI:15378"/>
        <dbReference type="ChEBI" id="CHEBI:29991"/>
        <dbReference type="ChEBI" id="CHEBI:30616"/>
        <dbReference type="ChEBI" id="CHEBI:43474"/>
        <dbReference type="ChEBI" id="CHEBI:58443"/>
        <dbReference type="ChEBI" id="CHEBI:77657"/>
        <dbReference type="ChEBI" id="CHEBI:456216"/>
        <dbReference type="EC" id="6.3.2.6"/>
    </reaction>
</comment>
<comment type="pathway">
    <text evidence="1">Purine metabolism; IMP biosynthesis via de novo pathway; 5-amino-1-(5-phospho-D-ribosyl)imidazole-4-carboxamide from 5-amino-1-(5-phospho-D-ribosyl)imidazole-4-carboxylate: step 1/2.</text>
</comment>
<comment type="similarity">
    <text evidence="1">Belongs to the SAICAR synthetase family.</text>
</comment>
<keyword id="KW-0067">ATP-binding</keyword>
<keyword id="KW-0436">Ligase</keyword>
<keyword id="KW-0547">Nucleotide-binding</keyword>
<keyword id="KW-0658">Purine biosynthesis</keyword>